<sequence length="349" mass="37432">MIINSLKRFGITTGAAASAAAKAAVIGLLNREKRNTVVIPTPIGLRLEIPVEKVEIDSGIACAEVKKFSGDNPDILDGLAIRCCAKLNESNEIVIVGGKGVGKVTRSGLKATMGETAISPTVRDMVINAIREVTDKGIQITIEVPNGDIIAENTLNKMVGIVGGISILGTTGIETPVSDDDYLEHIKCELNVIRQSYDFVVIAPGNSAAKYASKLFDSNSIIKVGDRIGDSIKLASSVFRKVILAGLPAKLLKVYAGIFNTHFSQGDARLESLTHASVLAGLPYDVLTKITNALSVEEAFTYMTKEQRRKVMKIVAEKILSRIKSFNGDINFCVIIFDYDGESLSRVGC</sequence>
<reference key="1">
    <citation type="journal article" date="2009" name="Proc. Natl. Acad. Sci. U.S.A.">
        <title>Biogeography of the Sulfolobus islandicus pan-genome.</title>
        <authorList>
            <person name="Reno M.L."/>
            <person name="Held N.L."/>
            <person name="Fields C.J."/>
            <person name="Burke P.V."/>
            <person name="Whitaker R.J."/>
        </authorList>
    </citation>
    <scope>NUCLEOTIDE SEQUENCE [LARGE SCALE GENOMIC DNA]</scope>
    <source>
        <strain>M.14.25 / Kamchatka #1</strain>
    </source>
</reference>
<name>CBID_SACI4</name>
<protein>
    <recommendedName>
        <fullName evidence="1">Cobalt-precorrin-5B C(1)-methyltransferase</fullName>
        <ecNumber evidence="1">2.1.1.195</ecNumber>
    </recommendedName>
    <alternativeName>
        <fullName evidence="1">Cobalt-precorrin-6A synthase</fullName>
    </alternativeName>
</protein>
<proteinExistence type="inferred from homology"/>
<feature type="chain" id="PRO_1000212943" description="Cobalt-precorrin-5B C(1)-methyltransferase">
    <location>
        <begin position="1"/>
        <end position="349"/>
    </location>
</feature>
<comment type="function">
    <text evidence="1">Catalyzes the methylation of C-1 in cobalt-precorrin-5B to form cobalt-precorrin-6A.</text>
</comment>
<comment type="catalytic activity">
    <reaction evidence="1">
        <text>Co-precorrin-5B + S-adenosyl-L-methionine = Co-precorrin-6A + S-adenosyl-L-homocysteine</text>
        <dbReference type="Rhea" id="RHEA:26285"/>
        <dbReference type="ChEBI" id="CHEBI:57856"/>
        <dbReference type="ChEBI" id="CHEBI:59789"/>
        <dbReference type="ChEBI" id="CHEBI:60063"/>
        <dbReference type="ChEBI" id="CHEBI:60064"/>
        <dbReference type="EC" id="2.1.1.195"/>
    </reaction>
</comment>
<comment type="pathway">
    <text evidence="1">Cofactor biosynthesis; adenosylcobalamin biosynthesis; cob(II)yrinate a,c-diamide from sirohydrochlorin (anaerobic route): step 6/10.</text>
</comment>
<comment type="similarity">
    <text evidence="1">Belongs to the CbiD family.</text>
</comment>
<dbReference type="EC" id="2.1.1.195" evidence="1"/>
<dbReference type="EMBL" id="CP001400">
    <property type="protein sequence ID" value="ACP37003.1"/>
    <property type="molecule type" value="Genomic_DNA"/>
</dbReference>
<dbReference type="RefSeq" id="WP_012710290.1">
    <property type="nucleotide sequence ID" value="NC_012588.1"/>
</dbReference>
<dbReference type="SMR" id="C3MTW9"/>
<dbReference type="GeneID" id="84060591"/>
<dbReference type="KEGG" id="sia:M1425_0111"/>
<dbReference type="HOGENOM" id="CLU_041273_1_0_2"/>
<dbReference type="UniPathway" id="UPA00148">
    <property type="reaction ID" value="UER00227"/>
</dbReference>
<dbReference type="Proteomes" id="UP000001350">
    <property type="component" value="Chromosome"/>
</dbReference>
<dbReference type="GO" id="GO:0043780">
    <property type="term" value="F:cobalt-precorrin-5B C1-methyltransferase activity"/>
    <property type="evidence" value="ECO:0007669"/>
    <property type="project" value="RHEA"/>
</dbReference>
<dbReference type="GO" id="GO:0019251">
    <property type="term" value="P:anaerobic cobalamin biosynthetic process"/>
    <property type="evidence" value="ECO:0007669"/>
    <property type="project" value="UniProtKB-UniRule"/>
</dbReference>
<dbReference type="GO" id="GO:0032259">
    <property type="term" value="P:methylation"/>
    <property type="evidence" value="ECO:0007669"/>
    <property type="project" value="UniProtKB-KW"/>
</dbReference>
<dbReference type="Gene3D" id="3.30.2110.10">
    <property type="entry name" value="CbiD-like"/>
    <property type="match status" value="1"/>
</dbReference>
<dbReference type="Gene3D" id="3.40.50.10720">
    <property type="entry name" value="CbiD-like domains"/>
    <property type="match status" value="1"/>
</dbReference>
<dbReference type="HAMAP" id="MF_00787">
    <property type="entry name" value="CbiD"/>
    <property type="match status" value="1"/>
</dbReference>
<dbReference type="InterPro" id="IPR002748">
    <property type="entry name" value="CbiD"/>
</dbReference>
<dbReference type="InterPro" id="IPR036074">
    <property type="entry name" value="CbiD_sf"/>
</dbReference>
<dbReference type="NCBIfam" id="TIGR00312">
    <property type="entry name" value="cbiD"/>
    <property type="match status" value="1"/>
</dbReference>
<dbReference type="PANTHER" id="PTHR35863">
    <property type="entry name" value="COBALT-PRECORRIN-5B C(1)-METHYLTRANSFERASE"/>
    <property type="match status" value="1"/>
</dbReference>
<dbReference type="PANTHER" id="PTHR35863:SF1">
    <property type="entry name" value="COBALT-PRECORRIN-5B C(1)-METHYLTRANSFERASE"/>
    <property type="match status" value="1"/>
</dbReference>
<dbReference type="Pfam" id="PF01888">
    <property type="entry name" value="CbiD"/>
    <property type="match status" value="1"/>
</dbReference>
<dbReference type="PIRSF" id="PIRSF026782">
    <property type="entry name" value="CbiD"/>
    <property type="match status" value="1"/>
</dbReference>
<dbReference type="SUPFAM" id="SSF111342">
    <property type="entry name" value="CbiD-like"/>
    <property type="match status" value="1"/>
</dbReference>
<gene>
    <name evidence="1" type="primary">cbiD</name>
    <name type="ordered locus">M1425_0111</name>
</gene>
<evidence type="ECO:0000255" key="1">
    <source>
        <dbReference type="HAMAP-Rule" id="MF_00787"/>
    </source>
</evidence>
<keyword id="KW-0169">Cobalamin biosynthesis</keyword>
<keyword id="KW-0489">Methyltransferase</keyword>
<keyword id="KW-0949">S-adenosyl-L-methionine</keyword>
<keyword id="KW-0808">Transferase</keyword>
<accession>C3MTW9</accession>
<organism>
    <name type="scientific">Saccharolobus islandicus (strain M.14.25 / Kamchatka #1)</name>
    <name type="common">Sulfolobus islandicus</name>
    <dbReference type="NCBI Taxonomy" id="427317"/>
    <lineage>
        <taxon>Archaea</taxon>
        <taxon>Thermoproteota</taxon>
        <taxon>Thermoprotei</taxon>
        <taxon>Sulfolobales</taxon>
        <taxon>Sulfolobaceae</taxon>
        <taxon>Saccharolobus</taxon>
    </lineage>
</organism>